<dbReference type="EMBL" id="AC120508">
    <property type="protein sequence ID" value="AAO38484.1"/>
    <property type="molecule type" value="Genomic_DNA"/>
</dbReference>
<dbReference type="EMBL" id="DP000009">
    <property type="protein sequence ID" value="ABF98325.1"/>
    <property type="molecule type" value="Genomic_DNA"/>
</dbReference>
<dbReference type="EMBL" id="AP008209">
    <property type="protein sequence ID" value="BAF12880.1"/>
    <property type="molecule type" value="Genomic_DNA"/>
</dbReference>
<dbReference type="EMBL" id="AP014959">
    <property type="protein sequence ID" value="BAS85864.1"/>
    <property type="molecule type" value="Genomic_DNA"/>
</dbReference>
<dbReference type="EMBL" id="CM000140">
    <property type="protein sequence ID" value="EAZ28222.1"/>
    <property type="molecule type" value="Genomic_DNA"/>
</dbReference>
<dbReference type="RefSeq" id="XP_015630078.1">
    <property type="nucleotide sequence ID" value="XM_015774592.1"/>
</dbReference>
<dbReference type="SMR" id="Q851J9"/>
<dbReference type="FunCoup" id="Q851J9">
    <property type="interactions" value="44"/>
</dbReference>
<dbReference type="STRING" id="39947.Q851J9"/>
<dbReference type="PaxDb" id="39947-Q851J9"/>
<dbReference type="EnsemblPlants" id="Os03t0693800-01">
    <property type="protein sequence ID" value="Os03t0693800-01"/>
    <property type="gene ID" value="Os03g0693800"/>
</dbReference>
<dbReference type="Gramene" id="Os03t0693800-01">
    <property type="protein sequence ID" value="Os03t0693800-01"/>
    <property type="gene ID" value="Os03g0693800"/>
</dbReference>
<dbReference type="KEGG" id="dosa:Os03g0693800"/>
<dbReference type="eggNOG" id="ENOG502QSRM">
    <property type="taxonomic scope" value="Eukaryota"/>
</dbReference>
<dbReference type="HOGENOM" id="CLU_015790_0_0_1"/>
<dbReference type="InParanoid" id="Q851J9"/>
<dbReference type="OMA" id="PCKPERE"/>
<dbReference type="OrthoDB" id="635918at2759"/>
<dbReference type="Proteomes" id="UP000000763">
    <property type="component" value="Chromosome 3"/>
</dbReference>
<dbReference type="Proteomes" id="UP000007752">
    <property type="component" value="Chromosome 3"/>
</dbReference>
<dbReference type="Proteomes" id="UP000059680">
    <property type="component" value="Chromosome 3"/>
</dbReference>
<dbReference type="GO" id="GO:0048046">
    <property type="term" value="C:apoplast"/>
    <property type="evidence" value="ECO:0007669"/>
    <property type="project" value="UniProtKB-SubCell"/>
</dbReference>
<dbReference type="GO" id="GO:0030145">
    <property type="term" value="F:manganese ion binding"/>
    <property type="evidence" value="ECO:0007669"/>
    <property type="project" value="InterPro"/>
</dbReference>
<dbReference type="CDD" id="cd02241">
    <property type="entry name" value="cupin_OxOx"/>
    <property type="match status" value="1"/>
</dbReference>
<dbReference type="FunFam" id="2.60.120.10:FF:000005">
    <property type="entry name" value="Germin-like protein subfamily 1 member 8"/>
    <property type="match status" value="1"/>
</dbReference>
<dbReference type="Gene3D" id="2.60.120.10">
    <property type="entry name" value="Jelly Rolls"/>
    <property type="match status" value="1"/>
</dbReference>
<dbReference type="InterPro" id="IPR006045">
    <property type="entry name" value="Cupin_1"/>
</dbReference>
<dbReference type="InterPro" id="IPR001929">
    <property type="entry name" value="Germin"/>
</dbReference>
<dbReference type="InterPro" id="IPR019780">
    <property type="entry name" value="Germin_Mn-BS"/>
</dbReference>
<dbReference type="InterPro" id="IPR014710">
    <property type="entry name" value="RmlC-like_jellyroll"/>
</dbReference>
<dbReference type="InterPro" id="IPR011051">
    <property type="entry name" value="RmlC_Cupin_sf"/>
</dbReference>
<dbReference type="PANTHER" id="PTHR31238">
    <property type="entry name" value="GERMIN-LIKE PROTEIN SUBFAMILY 3 MEMBER 3"/>
    <property type="match status" value="1"/>
</dbReference>
<dbReference type="Pfam" id="PF00190">
    <property type="entry name" value="Cupin_1"/>
    <property type="match status" value="1"/>
</dbReference>
<dbReference type="PRINTS" id="PR00325">
    <property type="entry name" value="GERMIN"/>
</dbReference>
<dbReference type="SMART" id="SM00835">
    <property type="entry name" value="Cupin_1"/>
    <property type="match status" value="1"/>
</dbReference>
<dbReference type="SUPFAM" id="SSF51182">
    <property type="entry name" value="RmlC-like cupins"/>
    <property type="match status" value="1"/>
</dbReference>
<dbReference type="PROSITE" id="PS00725">
    <property type="entry name" value="GERMIN"/>
    <property type="match status" value="1"/>
</dbReference>
<protein>
    <recommendedName>
        <fullName>Putative germin-like protein 3-4</fullName>
    </recommendedName>
</protein>
<evidence type="ECO:0000250" key="1"/>
<evidence type="ECO:0000255" key="2"/>
<evidence type="ECO:0000305" key="3"/>
<gene>
    <name type="ordered locus">Os03g0693800</name>
    <name type="ordered locus">LOC_Os03g48760</name>
    <name type="ORF">OsJ_011705</name>
    <name type="ORF">OSJNBb0021O11.13</name>
</gene>
<comment type="function">
    <text>May play a role in plant defense. Probably has no oxalate oxidase activity even if the active site is conserved.</text>
</comment>
<comment type="subunit">
    <text evidence="1">Oligomer (believed to be a pentamer but probably hexamer).</text>
</comment>
<comment type="subcellular location">
    <subcellularLocation>
        <location evidence="1">Secreted</location>
        <location evidence="1">Extracellular space</location>
        <location evidence="1">Apoplast</location>
    </subcellularLocation>
</comment>
<comment type="similarity">
    <text evidence="3">Belongs to the germin family.</text>
</comment>
<proteinExistence type="inferred from homology"/>
<name>GL34_ORYSJ</name>
<reference key="1">
    <citation type="journal article" date="2005" name="Genome Res.">
        <title>Sequence, annotation, and analysis of synteny between rice chromosome 3 and diverged grass species.</title>
        <authorList>
            <consortium name="The rice chromosome 3 sequencing consortium"/>
            <person name="Buell C.R."/>
            <person name="Yuan Q."/>
            <person name="Ouyang S."/>
            <person name="Liu J."/>
            <person name="Zhu W."/>
            <person name="Wang A."/>
            <person name="Maiti R."/>
            <person name="Haas B."/>
            <person name="Wortman J."/>
            <person name="Pertea M."/>
            <person name="Jones K.M."/>
            <person name="Kim M."/>
            <person name="Overton L."/>
            <person name="Tsitrin T."/>
            <person name="Fadrosh D."/>
            <person name="Bera J."/>
            <person name="Weaver B."/>
            <person name="Jin S."/>
            <person name="Johri S."/>
            <person name="Reardon M."/>
            <person name="Webb K."/>
            <person name="Hill J."/>
            <person name="Moffat K."/>
            <person name="Tallon L."/>
            <person name="Van Aken S."/>
            <person name="Lewis M."/>
            <person name="Utterback T."/>
            <person name="Feldblyum T."/>
            <person name="Zismann V."/>
            <person name="Iobst S."/>
            <person name="Hsiao J."/>
            <person name="de Vazeille A.R."/>
            <person name="Salzberg S.L."/>
            <person name="White O."/>
            <person name="Fraser C.M."/>
            <person name="Yu Y."/>
            <person name="Kim H."/>
            <person name="Rambo T."/>
            <person name="Currie J."/>
            <person name="Collura K."/>
            <person name="Kernodle-Thompson S."/>
            <person name="Wei F."/>
            <person name="Kudrna K."/>
            <person name="Ammiraju J.S.S."/>
            <person name="Luo M."/>
            <person name="Goicoechea J.L."/>
            <person name="Wing R.A."/>
            <person name="Henry D."/>
            <person name="Oates R."/>
            <person name="Palmer M."/>
            <person name="Pries G."/>
            <person name="Saski C."/>
            <person name="Simmons J."/>
            <person name="Soderlund C."/>
            <person name="Nelson W."/>
            <person name="de la Bastide M."/>
            <person name="Spiegel L."/>
            <person name="Nascimento L."/>
            <person name="Huang E."/>
            <person name="Preston R."/>
            <person name="Zutavern T."/>
            <person name="Palmer L."/>
            <person name="O'Shaughnessy A."/>
            <person name="Dike S."/>
            <person name="McCombie W.R."/>
            <person name="Minx P."/>
            <person name="Cordum H."/>
            <person name="Wilson R."/>
            <person name="Jin W."/>
            <person name="Lee H.R."/>
            <person name="Jiang J."/>
            <person name="Jackson S."/>
        </authorList>
    </citation>
    <scope>NUCLEOTIDE SEQUENCE [LARGE SCALE GENOMIC DNA]</scope>
    <source>
        <strain>cv. Nipponbare</strain>
    </source>
</reference>
<reference key="2">
    <citation type="journal article" date="2005" name="Nature">
        <title>The map-based sequence of the rice genome.</title>
        <authorList>
            <consortium name="International rice genome sequencing project (IRGSP)"/>
        </authorList>
    </citation>
    <scope>NUCLEOTIDE SEQUENCE [LARGE SCALE GENOMIC DNA]</scope>
    <source>
        <strain>cv. Nipponbare</strain>
    </source>
</reference>
<reference key="3">
    <citation type="journal article" date="2008" name="Nucleic Acids Res.">
        <title>The rice annotation project database (RAP-DB): 2008 update.</title>
        <authorList>
            <consortium name="The rice annotation project (RAP)"/>
        </authorList>
    </citation>
    <scope>GENOME REANNOTATION</scope>
    <source>
        <strain>cv. Nipponbare</strain>
    </source>
</reference>
<reference key="4">
    <citation type="journal article" date="2013" name="Rice">
        <title>Improvement of the Oryza sativa Nipponbare reference genome using next generation sequence and optical map data.</title>
        <authorList>
            <person name="Kawahara Y."/>
            <person name="de la Bastide M."/>
            <person name="Hamilton J.P."/>
            <person name="Kanamori H."/>
            <person name="McCombie W.R."/>
            <person name="Ouyang S."/>
            <person name="Schwartz D.C."/>
            <person name="Tanaka T."/>
            <person name="Wu J."/>
            <person name="Zhou S."/>
            <person name="Childs K.L."/>
            <person name="Davidson R.M."/>
            <person name="Lin H."/>
            <person name="Quesada-Ocampo L."/>
            <person name="Vaillancourt B."/>
            <person name="Sakai H."/>
            <person name="Lee S.S."/>
            <person name="Kim J."/>
            <person name="Numa H."/>
            <person name="Itoh T."/>
            <person name="Buell C.R."/>
            <person name="Matsumoto T."/>
        </authorList>
    </citation>
    <scope>GENOME REANNOTATION</scope>
    <source>
        <strain>cv. Nipponbare</strain>
    </source>
</reference>
<reference key="5">
    <citation type="journal article" date="2005" name="PLoS Biol.">
        <title>The genomes of Oryza sativa: a history of duplications.</title>
        <authorList>
            <person name="Yu J."/>
            <person name="Wang J."/>
            <person name="Lin W."/>
            <person name="Li S."/>
            <person name="Li H."/>
            <person name="Zhou J."/>
            <person name="Ni P."/>
            <person name="Dong W."/>
            <person name="Hu S."/>
            <person name="Zeng C."/>
            <person name="Zhang J."/>
            <person name="Zhang Y."/>
            <person name="Li R."/>
            <person name="Xu Z."/>
            <person name="Li S."/>
            <person name="Li X."/>
            <person name="Zheng H."/>
            <person name="Cong L."/>
            <person name="Lin L."/>
            <person name="Yin J."/>
            <person name="Geng J."/>
            <person name="Li G."/>
            <person name="Shi J."/>
            <person name="Liu J."/>
            <person name="Lv H."/>
            <person name="Li J."/>
            <person name="Wang J."/>
            <person name="Deng Y."/>
            <person name="Ran L."/>
            <person name="Shi X."/>
            <person name="Wang X."/>
            <person name="Wu Q."/>
            <person name="Li C."/>
            <person name="Ren X."/>
            <person name="Wang J."/>
            <person name="Wang X."/>
            <person name="Li D."/>
            <person name="Liu D."/>
            <person name="Zhang X."/>
            <person name="Ji Z."/>
            <person name="Zhao W."/>
            <person name="Sun Y."/>
            <person name="Zhang Z."/>
            <person name="Bao J."/>
            <person name="Han Y."/>
            <person name="Dong L."/>
            <person name="Ji J."/>
            <person name="Chen P."/>
            <person name="Wu S."/>
            <person name="Liu J."/>
            <person name="Xiao Y."/>
            <person name="Bu D."/>
            <person name="Tan J."/>
            <person name="Yang L."/>
            <person name="Ye C."/>
            <person name="Zhang J."/>
            <person name="Xu J."/>
            <person name="Zhou Y."/>
            <person name="Yu Y."/>
            <person name="Zhang B."/>
            <person name="Zhuang S."/>
            <person name="Wei H."/>
            <person name="Liu B."/>
            <person name="Lei M."/>
            <person name="Yu H."/>
            <person name="Li Y."/>
            <person name="Xu H."/>
            <person name="Wei S."/>
            <person name="He X."/>
            <person name="Fang L."/>
            <person name="Zhang Z."/>
            <person name="Zhang Y."/>
            <person name="Huang X."/>
            <person name="Su Z."/>
            <person name="Tong W."/>
            <person name="Li J."/>
            <person name="Tong Z."/>
            <person name="Li S."/>
            <person name="Ye J."/>
            <person name="Wang L."/>
            <person name="Fang L."/>
            <person name="Lei T."/>
            <person name="Chen C.-S."/>
            <person name="Chen H.-C."/>
            <person name="Xu Z."/>
            <person name="Li H."/>
            <person name="Huang H."/>
            <person name="Zhang F."/>
            <person name="Xu H."/>
            <person name="Li N."/>
            <person name="Zhao C."/>
            <person name="Li S."/>
            <person name="Dong L."/>
            <person name="Huang Y."/>
            <person name="Li L."/>
            <person name="Xi Y."/>
            <person name="Qi Q."/>
            <person name="Li W."/>
            <person name="Zhang B."/>
            <person name="Hu W."/>
            <person name="Zhang Y."/>
            <person name="Tian X."/>
            <person name="Jiao Y."/>
            <person name="Liang X."/>
            <person name="Jin J."/>
            <person name="Gao L."/>
            <person name="Zheng W."/>
            <person name="Hao B."/>
            <person name="Liu S.-M."/>
            <person name="Wang W."/>
            <person name="Yuan L."/>
            <person name="Cao M."/>
            <person name="McDermott J."/>
            <person name="Samudrala R."/>
            <person name="Wang J."/>
            <person name="Wong G.K.-S."/>
            <person name="Yang H."/>
        </authorList>
    </citation>
    <scope>NUCLEOTIDE SEQUENCE [LARGE SCALE GENOMIC DNA]</scope>
    <source>
        <strain>cv. Nipponbare</strain>
    </source>
</reference>
<accession>Q851J9</accession>
<accession>A0A0P0W296</accession>
<feature type="signal peptide" evidence="2">
    <location>
        <begin position="1"/>
        <end position="31"/>
    </location>
</feature>
<feature type="chain" id="PRO_0000365505" description="Putative germin-like protein 3-4">
    <location>
        <begin position="32"/>
        <end position="229"/>
    </location>
</feature>
<feature type="domain" description="Cupin type-1" evidence="2">
    <location>
        <begin position="67"/>
        <end position="219"/>
    </location>
</feature>
<feature type="binding site" evidence="1">
    <location>
        <position position="116"/>
    </location>
    <ligand>
        <name>Mn(2+)</name>
        <dbReference type="ChEBI" id="CHEBI:29035"/>
    </ligand>
</feature>
<feature type="binding site" evidence="1">
    <location>
        <position position="118"/>
    </location>
    <ligand>
        <name>Mn(2+)</name>
        <dbReference type="ChEBI" id="CHEBI:29035"/>
    </ligand>
</feature>
<feature type="binding site" evidence="1">
    <location>
        <position position="123"/>
    </location>
    <ligand>
        <name>Mn(2+)</name>
        <dbReference type="ChEBI" id="CHEBI:29035"/>
    </ligand>
</feature>
<feature type="binding site" evidence="1">
    <location>
        <position position="165"/>
    </location>
    <ligand>
        <name>Mn(2+)</name>
        <dbReference type="ChEBI" id="CHEBI:29035"/>
    </ligand>
</feature>
<feature type="glycosylation site" description="N-linked (GlcNAc...) asparagine" evidence="2">
    <location>
        <position position="80"/>
    </location>
</feature>
<feature type="glycosylation site" description="N-linked (GlcNAc...) asparagine" evidence="2">
    <location>
        <position position="83"/>
    </location>
</feature>
<feature type="disulfide bond" evidence="1">
    <location>
        <begin position="38"/>
        <end position="53"/>
    </location>
</feature>
<organism>
    <name type="scientific">Oryza sativa subsp. japonica</name>
    <name type="common">Rice</name>
    <dbReference type="NCBI Taxonomy" id="39947"/>
    <lineage>
        <taxon>Eukaryota</taxon>
        <taxon>Viridiplantae</taxon>
        <taxon>Streptophyta</taxon>
        <taxon>Embryophyta</taxon>
        <taxon>Tracheophyta</taxon>
        <taxon>Spermatophyta</taxon>
        <taxon>Magnoliopsida</taxon>
        <taxon>Liliopsida</taxon>
        <taxon>Poales</taxon>
        <taxon>Poaceae</taxon>
        <taxon>BOP clade</taxon>
        <taxon>Oryzoideae</taxon>
        <taxon>Oryzeae</taxon>
        <taxon>Oryzinae</taxon>
        <taxon>Oryza</taxon>
        <taxon>Oryza sativa</taxon>
    </lineage>
</organism>
<sequence>MEHSFKTITAGVVFVVLLLQQAPVLIRATDADPLQDFCVADLDSKVTVNGHACKPASAAGDEFLFSSKIATGGDVNANPNGSNVTELDVAEWPGVNTLGVSMNRVDFAPGGTNPPHVHPRATEVGIVLRGELLVGIIGTLDMGNRYYSKVVRAGETFVIPRGLMHFQFNVGKTEATMVVSFNSQNPGIVFVPLTLFGSNPPIPTPVLVKALRVDTGVVELLKSKFTGGY</sequence>
<keyword id="KW-0052">Apoplast</keyword>
<keyword id="KW-1015">Disulfide bond</keyword>
<keyword id="KW-0325">Glycoprotein</keyword>
<keyword id="KW-0464">Manganese</keyword>
<keyword id="KW-0479">Metal-binding</keyword>
<keyword id="KW-1185">Reference proteome</keyword>
<keyword id="KW-0964">Secreted</keyword>
<keyword id="KW-0732">Signal</keyword>